<organism>
    <name type="scientific">Phenylobacterium zucineum (strain HLK1)</name>
    <dbReference type="NCBI Taxonomy" id="450851"/>
    <lineage>
        <taxon>Bacteria</taxon>
        <taxon>Pseudomonadati</taxon>
        <taxon>Pseudomonadota</taxon>
        <taxon>Alphaproteobacteria</taxon>
        <taxon>Caulobacterales</taxon>
        <taxon>Caulobacteraceae</taxon>
        <taxon>Phenylobacterium</taxon>
    </lineage>
</organism>
<evidence type="ECO:0000255" key="1">
    <source>
        <dbReference type="HAMAP-Rule" id="MF_00480"/>
    </source>
</evidence>
<evidence type="ECO:0000305" key="2"/>
<proteinExistence type="inferred from homology"/>
<protein>
    <recommendedName>
        <fullName evidence="1">Small ribosomal subunit protein uS7</fullName>
    </recommendedName>
    <alternativeName>
        <fullName evidence="2">30S ribosomal protein S7</fullName>
    </alternativeName>
</protein>
<name>RS7_PHEZH</name>
<gene>
    <name evidence="1" type="primary">rpsG</name>
    <name type="ordered locus">PHZ_c1225</name>
</gene>
<dbReference type="EMBL" id="CP000747">
    <property type="protein sequence ID" value="ACG77639.1"/>
    <property type="molecule type" value="Genomic_DNA"/>
</dbReference>
<dbReference type="RefSeq" id="WP_012521784.1">
    <property type="nucleotide sequence ID" value="NC_011144.1"/>
</dbReference>
<dbReference type="SMR" id="B4R8L2"/>
<dbReference type="STRING" id="450851.PHZ_c1225"/>
<dbReference type="KEGG" id="pzu:PHZ_c1225"/>
<dbReference type="eggNOG" id="COG0049">
    <property type="taxonomic scope" value="Bacteria"/>
</dbReference>
<dbReference type="HOGENOM" id="CLU_072226_1_1_5"/>
<dbReference type="OrthoDB" id="9807653at2"/>
<dbReference type="Proteomes" id="UP000001868">
    <property type="component" value="Chromosome"/>
</dbReference>
<dbReference type="GO" id="GO:0015935">
    <property type="term" value="C:small ribosomal subunit"/>
    <property type="evidence" value="ECO:0007669"/>
    <property type="project" value="InterPro"/>
</dbReference>
<dbReference type="GO" id="GO:0019843">
    <property type="term" value="F:rRNA binding"/>
    <property type="evidence" value="ECO:0007669"/>
    <property type="project" value="UniProtKB-UniRule"/>
</dbReference>
<dbReference type="GO" id="GO:0003735">
    <property type="term" value="F:structural constituent of ribosome"/>
    <property type="evidence" value="ECO:0007669"/>
    <property type="project" value="InterPro"/>
</dbReference>
<dbReference type="GO" id="GO:0000049">
    <property type="term" value="F:tRNA binding"/>
    <property type="evidence" value="ECO:0007669"/>
    <property type="project" value="UniProtKB-UniRule"/>
</dbReference>
<dbReference type="GO" id="GO:0006412">
    <property type="term" value="P:translation"/>
    <property type="evidence" value="ECO:0007669"/>
    <property type="project" value="UniProtKB-UniRule"/>
</dbReference>
<dbReference type="CDD" id="cd14869">
    <property type="entry name" value="uS7_Bacteria"/>
    <property type="match status" value="1"/>
</dbReference>
<dbReference type="FunFam" id="1.10.455.10:FF:000001">
    <property type="entry name" value="30S ribosomal protein S7"/>
    <property type="match status" value="1"/>
</dbReference>
<dbReference type="Gene3D" id="1.10.455.10">
    <property type="entry name" value="Ribosomal protein S7 domain"/>
    <property type="match status" value="1"/>
</dbReference>
<dbReference type="HAMAP" id="MF_00480_B">
    <property type="entry name" value="Ribosomal_uS7_B"/>
    <property type="match status" value="1"/>
</dbReference>
<dbReference type="InterPro" id="IPR000235">
    <property type="entry name" value="Ribosomal_uS7"/>
</dbReference>
<dbReference type="InterPro" id="IPR005717">
    <property type="entry name" value="Ribosomal_uS7_bac/org-type"/>
</dbReference>
<dbReference type="InterPro" id="IPR020606">
    <property type="entry name" value="Ribosomal_uS7_CS"/>
</dbReference>
<dbReference type="InterPro" id="IPR023798">
    <property type="entry name" value="Ribosomal_uS7_dom"/>
</dbReference>
<dbReference type="InterPro" id="IPR036823">
    <property type="entry name" value="Ribosomal_uS7_dom_sf"/>
</dbReference>
<dbReference type="NCBIfam" id="TIGR01029">
    <property type="entry name" value="rpsG_bact"/>
    <property type="match status" value="1"/>
</dbReference>
<dbReference type="PANTHER" id="PTHR11205">
    <property type="entry name" value="RIBOSOMAL PROTEIN S7"/>
    <property type="match status" value="1"/>
</dbReference>
<dbReference type="Pfam" id="PF00177">
    <property type="entry name" value="Ribosomal_S7"/>
    <property type="match status" value="1"/>
</dbReference>
<dbReference type="PIRSF" id="PIRSF002122">
    <property type="entry name" value="RPS7p_RPS7a_RPS5e_RPS7o"/>
    <property type="match status" value="1"/>
</dbReference>
<dbReference type="SUPFAM" id="SSF47973">
    <property type="entry name" value="Ribosomal protein S7"/>
    <property type="match status" value="1"/>
</dbReference>
<dbReference type="PROSITE" id="PS00052">
    <property type="entry name" value="RIBOSOMAL_S7"/>
    <property type="match status" value="1"/>
</dbReference>
<sequence length="157" mass="17935">MSRRRRADKREVLPDPKFGDLVVTKFMNYVMYEGKKAVAENIVYGAFDILEARRKDMGPLETFHAALDNVAPAIEVRSRRVGGATYQVPVEVRPERRRALAIRWLVNAARSRGENTMTEKLAGELLDASSNRGSAVKKREDTHKMAEANRAFSHYRW</sequence>
<keyword id="KW-1185">Reference proteome</keyword>
<keyword id="KW-0687">Ribonucleoprotein</keyword>
<keyword id="KW-0689">Ribosomal protein</keyword>
<keyword id="KW-0694">RNA-binding</keyword>
<keyword id="KW-0699">rRNA-binding</keyword>
<keyword id="KW-0820">tRNA-binding</keyword>
<comment type="function">
    <text evidence="1">One of the primary rRNA binding proteins, it binds directly to 16S rRNA where it nucleates assembly of the head domain of the 30S subunit. Is located at the subunit interface close to the decoding center, probably blocks exit of the E-site tRNA.</text>
</comment>
<comment type="subunit">
    <text evidence="1">Part of the 30S ribosomal subunit. Contacts proteins S9 and S11.</text>
</comment>
<comment type="similarity">
    <text evidence="1">Belongs to the universal ribosomal protein uS7 family.</text>
</comment>
<feature type="chain" id="PRO_1000125980" description="Small ribosomal subunit protein uS7">
    <location>
        <begin position="1"/>
        <end position="157"/>
    </location>
</feature>
<accession>B4R8L2</accession>
<reference key="1">
    <citation type="journal article" date="2008" name="BMC Genomics">
        <title>Complete genome of Phenylobacterium zucineum - a novel facultative intracellular bacterium isolated from human erythroleukemia cell line K562.</title>
        <authorList>
            <person name="Luo Y."/>
            <person name="Xu X."/>
            <person name="Ding Z."/>
            <person name="Liu Z."/>
            <person name="Zhang B."/>
            <person name="Yan Z."/>
            <person name="Sun J."/>
            <person name="Hu S."/>
            <person name="Hu X."/>
        </authorList>
    </citation>
    <scope>NUCLEOTIDE SEQUENCE [LARGE SCALE GENOMIC DNA]</scope>
    <source>
        <strain>HLK1</strain>
    </source>
</reference>